<organism>
    <name type="scientific">Streptococcus pneumoniae (strain JJA)</name>
    <dbReference type="NCBI Taxonomy" id="488222"/>
    <lineage>
        <taxon>Bacteria</taxon>
        <taxon>Bacillati</taxon>
        <taxon>Bacillota</taxon>
        <taxon>Bacilli</taxon>
        <taxon>Lactobacillales</taxon>
        <taxon>Streptococcaceae</taxon>
        <taxon>Streptococcus</taxon>
    </lineage>
</organism>
<protein>
    <recommendedName>
        <fullName evidence="1">Transcription antitermination protein NusB</fullName>
    </recommendedName>
    <alternativeName>
        <fullName evidence="1">Antitermination factor NusB</fullName>
    </alternativeName>
</protein>
<feature type="chain" id="PRO_1000192461" description="Transcription antitermination protein NusB">
    <location>
        <begin position="1"/>
        <end position="140"/>
    </location>
</feature>
<evidence type="ECO:0000255" key="1">
    <source>
        <dbReference type="HAMAP-Rule" id="MF_00073"/>
    </source>
</evidence>
<gene>
    <name evidence="1" type="primary">nusB</name>
    <name type="ordered locus">SPJ_0417</name>
</gene>
<accession>C1CCJ6</accession>
<proteinExistence type="inferred from homology"/>
<reference key="1">
    <citation type="journal article" date="2010" name="Genome Biol.">
        <title>Structure and dynamics of the pan-genome of Streptococcus pneumoniae and closely related species.</title>
        <authorList>
            <person name="Donati C."/>
            <person name="Hiller N.L."/>
            <person name="Tettelin H."/>
            <person name="Muzzi A."/>
            <person name="Croucher N.J."/>
            <person name="Angiuoli S.V."/>
            <person name="Oggioni M."/>
            <person name="Dunning Hotopp J.C."/>
            <person name="Hu F.Z."/>
            <person name="Riley D.R."/>
            <person name="Covacci A."/>
            <person name="Mitchell T.J."/>
            <person name="Bentley S.D."/>
            <person name="Kilian M."/>
            <person name="Ehrlich G.D."/>
            <person name="Rappuoli R."/>
            <person name="Moxon E.R."/>
            <person name="Masignani V."/>
        </authorList>
    </citation>
    <scope>NUCLEOTIDE SEQUENCE [LARGE SCALE GENOMIC DNA]</scope>
    <source>
        <strain>JJA</strain>
    </source>
</reference>
<keyword id="KW-0694">RNA-binding</keyword>
<keyword id="KW-0804">Transcription</keyword>
<keyword id="KW-0889">Transcription antitermination</keyword>
<keyword id="KW-0805">Transcription regulation</keyword>
<dbReference type="EMBL" id="CP000919">
    <property type="protein sequence ID" value="ACO20027.1"/>
    <property type="molecule type" value="Genomic_DNA"/>
</dbReference>
<dbReference type="RefSeq" id="WP_000203651.1">
    <property type="nucleotide sequence ID" value="NC_012466.1"/>
</dbReference>
<dbReference type="SMR" id="C1CCJ6"/>
<dbReference type="KEGG" id="sjj:SPJ_0417"/>
<dbReference type="HOGENOM" id="CLU_087843_3_2_9"/>
<dbReference type="Proteomes" id="UP000002206">
    <property type="component" value="Chromosome"/>
</dbReference>
<dbReference type="GO" id="GO:0005829">
    <property type="term" value="C:cytosol"/>
    <property type="evidence" value="ECO:0007669"/>
    <property type="project" value="TreeGrafter"/>
</dbReference>
<dbReference type="GO" id="GO:0003723">
    <property type="term" value="F:RNA binding"/>
    <property type="evidence" value="ECO:0007669"/>
    <property type="project" value="UniProtKB-UniRule"/>
</dbReference>
<dbReference type="GO" id="GO:0006353">
    <property type="term" value="P:DNA-templated transcription termination"/>
    <property type="evidence" value="ECO:0007669"/>
    <property type="project" value="UniProtKB-UniRule"/>
</dbReference>
<dbReference type="GO" id="GO:0031564">
    <property type="term" value="P:transcription antitermination"/>
    <property type="evidence" value="ECO:0007669"/>
    <property type="project" value="UniProtKB-KW"/>
</dbReference>
<dbReference type="FunFam" id="1.10.940.10:FF:000008">
    <property type="entry name" value="Transcription antitermination protein NusB"/>
    <property type="match status" value="1"/>
</dbReference>
<dbReference type="Gene3D" id="1.10.940.10">
    <property type="entry name" value="NusB-like"/>
    <property type="match status" value="1"/>
</dbReference>
<dbReference type="HAMAP" id="MF_00073">
    <property type="entry name" value="NusB"/>
    <property type="match status" value="1"/>
</dbReference>
<dbReference type="InterPro" id="IPR035926">
    <property type="entry name" value="NusB-like_sf"/>
</dbReference>
<dbReference type="InterPro" id="IPR011605">
    <property type="entry name" value="NusB_fam"/>
</dbReference>
<dbReference type="InterPro" id="IPR006027">
    <property type="entry name" value="NusB_RsmB_TIM44"/>
</dbReference>
<dbReference type="NCBIfam" id="TIGR01951">
    <property type="entry name" value="nusB"/>
    <property type="match status" value="1"/>
</dbReference>
<dbReference type="NCBIfam" id="NF001223">
    <property type="entry name" value="PRK00202.1-1"/>
    <property type="match status" value="1"/>
</dbReference>
<dbReference type="PANTHER" id="PTHR11078:SF3">
    <property type="entry name" value="ANTITERMINATION NUSB DOMAIN-CONTAINING PROTEIN"/>
    <property type="match status" value="1"/>
</dbReference>
<dbReference type="PANTHER" id="PTHR11078">
    <property type="entry name" value="N UTILIZATION SUBSTANCE PROTEIN B-RELATED"/>
    <property type="match status" value="1"/>
</dbReference>
<dbReference type="Pfam" id="PF01029">
    <property type="entry name" value="NusB"/>
    <property type="match status" value="1"/>
</dbReference>
<dbReference type="SUPFAM" id="SSF48013">
    <property type="entry name" value="NusB-like"/>
    <property type="match status" value="1"/>
</dbReference>
<comment type="function">
    <text evidence="1">Involved in transcription antitermination. Required for transcription of ribosomal RNA (rRNA) genes. Binds specifically to the boxA antiterminator sequence of the ribosomal RNA (rrn) operons.</text>
</comment>
<comment type="similarity">
    <text evidence="1">Belongs to the NusB family.</text>
</comment>
<name>NUSB_STRZJ</name>
<sequence length="140" mass="15920">MTSPLLESRRQLRKCAFQALMSLEFGTDVETACRFAYTHDREDTAVQLPAFLIDLVSGVQAKKEELDKQITQHLKAGWTIERLTLVERNLLRLGVFEITSFDTPQLVAVNEAIELAKDFSDQKSARFINGLLSQFVTEEQ</sequence>